<name>SYA_MYCGI</name>
<reference key="1">
    <citation type="submission" date="2007-04" db="EMBL/GenBank/DDBJ databases">
        <title>Complete sequence of chromosome of Mycobacterium gilvum PYR-GCK.</title>
        <authorList>
            <consortium name="US DOE Joint Genome Institute"/>
            <person name="Copeland A."/>
            <person name="Lucas S."/>
            <person name="Lapidus A."/>
            <person name="Barry K."/>
            <person name="Detter J.C."/>
            <person name="Glavina del Rio T."/>
            <person name="Hammon N."/>
            <person name="Israni S."/>
            <person name="Dalin E."/>
            <person name="Tice H."/>
            <person name="Pitluck S."/>
            <person name="Chain P."/>
            <person name="Malfatti S."/>
            <person name="Shin M."/>
            <person name="Vergez L."/>
            <person name="Schmutz J."/>
            <person name="Larimer F."/>
            <person name="Land M."/>
            <person name="Hauser L."/>
            <person name="Kyrpides N."/>
            <person name="Mikhailova N."/>
            <person name="Miller C."/>
            <person name="Richardson P."/>
        </authorList>
    </citation>
    <scope>NUCLEOTIDE SEQUENCE [LARGE SCALE GENOMIC DNA]</scope>
    <source>
        <strain>PYR-GCK</strain>
    </source>
</reference>
<organism>
    <name type="scientific">Mycolicibacterium gilvum (strain PYR-GCK)</name>
    <name type="common">Mycobacterium gilvum (strain PYR-GCK)</name>
    <dbReference type="NCBI Taxonomy" id="350054"/>
    <lineage>
        <taxon>Bacteria</taxon>
        <taxon>Bacillati</taxon>
        <taxon>Actinomycetota</taxon>
        <taxon>Actinomycetes</taxon>
        <taxon>Mycobacteriales</taxon>
        <taxon>Mycobacteriaceae</taxon>
        <taxon>Mycolicibacterium</taxon>
    </lineage>
</organism>
<evidence type="ECO:0000255" key="1">
    <source>
        <dbReference type="HAMAP-Rule" id="MF_00036"/>
    </source>
</evidence>
<proteinExistence type="inferred from homology"/>
<feature type="chain" id="PRO_0000347681" description="Alanine--tRNA ligase">
    <location>
        <begin position="1"/>
        <end position="898"/>
    </location>
</feature>
<feature type="binding site" evidence="1">
    <location>
        <position position="582"/>
    </location>
    <ligand>
        <name>Zn(2+)</name>
        <dbReference type="ChEBI" id="CHEBI:29105"/>
    </ligand>
</feature>
<feature type="binding site" evidence="1">
    <location>
        <position position="586"/>
    </location>
    <ligand>
        <name>Zn(2+)</name>
        <dbReference type="ChEBI" id="CHEBI:29105"/>
    </ligand>
</feature>
<feature type="binding site" evidence="1">
    <location>
        <position position="685"/>
    </location>
    <ligand>
        <name>Zn(2+)</name>
        <dbReference type="ChEBI" id="CHEBI:29105"/>
    </ligand>
</feature>
<feature type="binding site" evidence="1">
    <location>
        <position position="689"/>
    </location>
    <ligand>
        <name>Zn(2+)</name>
        <dbReference type="ChEBI" id="CHEBI:29105"/>
    </ligand>
</feature>
<sequence>MQTHEIRKRFLDHFVKAGHTEVPSASVILDDPNLLFVNAGMVQFVPYFLGQRTPPWDRATSVQKCIRTPDIDEVGITTRHNTFFQMAGNFSFGDYFKKGAIELAWSLLTNPVSEGGYGFDPERLWATVYLDDDEAIELWQEVAGLPAERIQRRGMADNYWSMGIPGPCGPCSEIYYDRGPDYGIDGGPEANEDRYIEIWNLVFMQNERGEGTSKDDFEILGPLPRKNIDTGMGVERIACLLQGVDNVYETDLVRPVIDLVAGIAPRGYGQGNHTDDVRYRIIGDHSRTAAIIIGDGVTPGNEGRGYVLRRLLRRIIRAAKLLGVEQPIMGELMATVRDEMGPSYPELVTDFERINRIAIAEETAFNRTLTAGSRLFEDAAETTRKAGSTVLSGDDAFTLHDTFGFPIDLTLEMAAEAGLSVDEEGFRGLMAEQRRRAKADAAARKQAHTDLSAYRELVDAGPTEFTGFDELTTEARILGIFVDGRRVPVVSHVQGGDAPGRVELILNRSPFYAESGGQIADEGTVTGTGASQTAKAAVTDVQKIAKTLWAHRITVESGEFVEGDTIVAAVDPRWRHGATQGHSGTHMVHAALRQVLGPNAVQAGSLNRPGYLRFDFNWQGALSDDQRSQIEEVTNEAVEADYEVHNFTTELEKAKSMGAMALFGENYPDEVRVVEIGGPFSIELCGGTHVRSSAQIGPVTILGESSVGSGVRRVEAYVGLDSFRHLAKERALMAGLASSLKVPSDEVPARVENLVERLRAAEKELDRLRLVNARAAAANAAAGAEQIGGIRLVAQRMAGGISAGDLRSLVGDIRGKLGSDPAVVALISEADDDTVPFVVAVNQAAQDRGLRANDLVKVLGAAVNGRGGGKADLAQGSGKGAAGIDAALAAIRAEMGRS</sequence>
<accession>A4TBW4</accession>
<gene>
    <name evidence="1" type="primary">alaS</name>
    <name type="ordered locus">Mflv_3763</name>
</gene>
<comment type="function">
    <text evidence="1">Catalyzes the attachment of alanine to tRNA(Ala) in a two-step reaction: alanine is first activated by ATP to form Ala-AMP and then transferred to the acceptor end of tRNA(Ala). Also edits incorrectly charged Ser-tRNA(Ala) and Gly-tRNA(Ala) via its editing domain.</text>
</comment>
<comment type="catalytic activity">
    <reaction evidence="1">
        <text>tRNA(Ala) + L-alanine + ATP = L-alanyl-tRNA(Ala) + AMP + diphosphate</text>
        <dbReference type="Rhea" id="RHEA:12540"/>
        <dbReference type="Rhea" id="RHEA-COMP:9657"/>
        <dbReference type="Rhea" id="RHEA-COMP:9923"/>
        <dbReference type="ChEBI" id="CHEBI:30616"/>
        <dbReference type="ChEBI" id="CHEBI:33019"/>
        <dbReference type="ChEBI" id="CHEBI:57972"/>
        <dbReference type="ChEBI" id="CHEBI:78442"/>
        <dbReference type="ChEBI" id="CHEBI:78497"/>
        <dbReference type="ChEBI" id="CHEBI:456215"/>
        <dbReference type="EC" id="6.1.1.7"/>
    </reaction>
</comment>
<comment type="cofactor">
    <cofactor evidence="1">
        <name>Zn(2+)</name>
        <dbReference type="ChEBI" id="CHEBI:29105"/>
    </cofactor>
    <text evidence="1">Binds 1 zinc ion per subunit.</text>
</comment>
<comment type="subcellular location">
    <subcellularLocation>
        <location evidence="1">Cytoplasm</location>
    </subcellularLocation>
</comment>
<comment type="domain">
    <text evidence="1">Consists of three domains; the N-terminal catalytic domain, the editing domain and the C-terminal C-Ala domain. The editing domain removes incorrectly charged amino acids, while the C-Ala domain, along with tRNA(Ala), serves as a bridge to cooperatively bring together the editing and aminoacylation centers thus stimulating deacylation of misacylated tRNAs.</text>
</comment>
<comment type="similarity">
    <text evidence="1">Belongs to the class-II aminoacyl-tRNA synthetase family.</text>
</comment>
<dbReference type="EC" id="6.1.1.7" evidence="1"/>
<dbReference type="EMBL" id="CP000656">
    <property type="protein sequence ID" value="ABP46235.1"/>
    <property type="molecule type" value="Genomic_DNA"/>
</dbReference>
<dbReference type="SMR" id="A4TBW4"/>
<dbReference type="STRING" id="350054.Mflv_3763"/>
<dbReference type="KEGG" id="mgi:Mflv_3763"/>
<dbReference type="eggNOG" id="COG0013">
    <property type="taxonomic scope" value="Bacteria"/>
</dbReference>
<dbReference type="HOGENOM" id="CLU_004485_1_1_11"/>
<dbReference type="OrthoDB" id="9803884at2"/>
<dbReference type="GO" id="GO:0005829">
    <property type="term" value="C:cytosol"/>
    <property type="evidence" value="ECO:0007669"/>
    <property type="project" value="TreeGrafter"/>
</dbReference>
<dbReference type="GO" id="GO:0004813">
    <property type="term" value="F:alanine-tRNA ligase activity"/>
    <property type="evidence" value="ECO:0007669"/>
    <property type="project" value="UniProtKB-UniRule"/>
</dbReference>
<dbReference type="GO" id="GO:0002161">
    <property type="term" value="F:aminoacyl-tRNA deacylase activity"/>
    <property type="evidence" value="ECO:0007669"/>
    <property type="project" value="TreeGrafter"/>
</dbReference>
<dbReference type="GO" id="GO:0005524">
    <property type="term" value="F:ATP binding"/>
    <property type="evidence" value="ECO:0007669"/>
    <property type="project" value="UniProtKB-UniRule"/>
</dbReference>
<dbReference type="GO" id="GO:0000049">
    <property type="term" value="F:tRNA binding"/>
    <property type="evidence" value="ECO:0007669"/>
    <property type="project" value="UniProtKB-KW"/>
</dbReference>
<dbReference type="GO" id="GO:0008270">
    <property type="term" value="F:zinc ion binding"/>
    <property type="evidence" value="ECO:0007669"/>
    <property type="project" value="UniProtKB-UniRule"/>
</dbReference>
<dbReference type="GO" id="GO:0006419">
    <property type="term" value="P:alanyl-tRNA aminoacylation"/>
    <property type="evidence" value="ECO:0007669"/>
    <property type="project" value="UniProtKB-UniRule"/>
</dbReference>
<dbReference type="CDD" id="cd00673">
    <property type="entry name" value="AlaRS_core"/>
    <property type="match status" value="1"/>
</dbReference>
<dbReference type="FunFam" id="3.10.310.40:FF:000001">
    <property type="entry name" value="Alanine--tRNA ligase"/>
    <property type="match status" value="1"/>
</dbReference>
<dbReference type="FunFam" id="3.30.54.20:FF:000001">
    <property type="entry name" value="Alanine--tRNA ligase"/>
    <property type="match status" value="1"/>
</dbReference>
<dbReference type="FunFam" id="3.30.930.10:FF:000004">
    <property type="entry name" value="Alanine--tRNA ligase"/>
    <property type="match status" value="1"/>
</dbReference>
<dbReference type="FunFam" id="3.30.980.10:FF:000004">
    <property type="entry name" value="Alanine--tRNA ligase, cytoplasmic"/>
    <property type="match status" value="1"/>
</dbReference>
<dbReference type="Gene3D" id="2.40.30.130">
    <property type="match status" value="1"/>
</dbReference>
<dbReference type="Gene3D" id="3.10.310.40">
    <property type="match status" value="1"/>
</dbReference>
<dbReference type="Gene3D" id="3.30.54.20">
    <property type="match status" value="1"/>
</dbReference>
<dbReference type="Gene3D" id="6.10.250.550">
    <property type="match status" value="1"/>
</dbReference>
<dbReference type="Gene3D" id="3.30.930.10">
    <property type="entry name" value="Bira Bifunctional Protein, Domain 2"/>
    <property type="match status" value="1"/>
</dbReference>
<dbReference type="Gene3D" id="3.30.980.10">
    <property type="entry name" value="Threonyl-trna Synthetase, Chain A, domain 2"/>
    <property type="match status" value="1"/>
</dbReference>
<dbReference type="HAMAP" id="MF_00036_B">
    <property type="entry name" value="Ala_tRNA_synth_B"/>
    <property type="match status" value="1"/>
</dbReference>
<dbReference type="InterPro" id="IPR045864">
    <property type="entry name" value="aa-tRNA-synth_II/BPL/LPL"/>
</dbReference>
<dbReference type="InterPro" id="IPR002318">
    <property type="entry name" value="Ala-tRNA-lgiase_IIc"/>
</dbReference>
<dbReference type="InterPro" id="IPR018162">
    <property type="entry name" value="Ala-tRNA-ligase_IIc_anticod-bd"/>
</dbReference>
<dbReference type="InterPro" id="IPR018165">
    <property type="entry name" value="Ala-tRNA-synth_IIc_core"/>
</dbReference>
<dbReference type="InterPro" id="IPR018164">
    <property type="entry name" value="Ala-tRNA-synth_IIc_N"/>
</dbReference>
<dbReference type="InterPro" id="IPR050058">
    <property type="entry name" value="Ala-tRNA_ligase"/>
</dbReference>
<dbReference type="InterPro" id="IPR023033">
    <property type="entry name" value="Ala_tRNA_ligase_euk/bac"/>
</dbReference>
<dbReference type="InterPro" id="IPR003156">
    <property type="entry name" value="DHHA1_dom"/>
</dbReference>
<dbReference type="InterPro" id="IPR018163">
    <property type="entry name" value="Thr/Ala-tRNA-synth_IIc_edit"/>
</dbReference>
<dbReference type="InterPro" id="IPR009000">
    <property type="entry name" value="Transl_B-barrel_sf"/>
</dbReference>
<dbReference type="InterPro" id="IPR012947">
    <property type="entry name" value="tRNA_SAD"/>
</dbReference>
<dbReference type="NCBIfam" id="TIGR00344">
    <property type="entry name" value="alaS"/>
    <property type="match status" value="1"/>
</dbReference>
<dbReference type="PANTHER" id="PTHR11777:SF9">
    <property type="entry name" value="ALANINE--TRNA LIGASE, CYTOPLASMIC"/>
    <property type="match status" value="1"/>
</dbReference>
<dbReference type="PANTHER" id="PTHR11777">
    <property type="entry name" value="ALANYL-TRNA SYNTHETASE"/>
    <property type="match status" value="1"/>
</dbReference>
<dbReference type="Pfam" id="PF02272">
    <property type="entry name" value="DHHA1"/>
    <property type="match status" value="1"/>
</dbReference>
<dbReference type="Pfam" id="PF01411">
    <property type="entry name" value="tRNA-synt_2c"/>
    <property type="match status" value="1"/>
</dbReference>
<dbReference type="Pfam" id="PF07973">
    <property type="entry name" value="tRNA_SAD"/>
    <property type="match status" value="1"/>
</dbReference>
<dbReference type="PRINTS" id="PR00980">
    <property type="entry name" value="TRNASYNTHALA"/>
</dbReference>
<dbReference type="SMART" id="SM00863">
    <property type="entry name" value="tRNA_SAD"/>
    <property type="match status" value="1"/>
</dbReference>
<dbReference type="SUPFAM" id="SSF55681">
    <property type="entry name" value="Class II aaRS and biotin synthetases"/>
    <property type="match status" value="1"/>
</dbReference>
<dbReference type="SUPFAM" id="SSF101353">
    <property type="entry name" value="Putative anticodon-binding domain of alanyl-tRNA synthetase (AlaRS)"/>
    <property type="match status" value="1"/>
</dbReference>
<dbReference type="SUPFAM" id="SSF55186">
    <property type="entry name" value="ThrRS/AlaRS common domain"/>
    <property type="match status" value="1"/>
</dbReference>
<dbReference type="SUPFAM" id="SSF50447">
    <property type="entry name" value="Translation proteins"/>
    <property type="match status" value="1"/>
</dbReference>
<dbReference type="PROSITE" id="PS50860">
    <property type="entry name" value="AA_TRNA_LIGASE_II_ALA"/>
    <property type="match status" value="1"/>
</dbReference>
<keyword id="KW-0030">Aminoacyl-tRNA synthetase</keyword>
<keyword id="KW-0067">ATP-binding</keyword>
<keyword id="KW-0963">Cytoplasm</keyword>
<keyword id="KW-0436">Ligase</keyword>
<keyword id="KW-0479">Metal-binding</keyword>
<keyword id="KW-0547">Nucleotide-binding</keyword>
<keyword id="KW-0648">Protein biosynthesis</keyword>
<keyword id="KW-0694">RNA-binding</keyword>
<keyword id="KW-0820">tRNA-binding</keyword>
<keyword id="KW-0862">Zinc</keyword>
<protein>
    <recommendedName>
        <fullName evidence="1">Alanine--tRNA ligase</fullName>
        <ecNumber evidence="1">6.1.1.7</ecNumber>
    </recommendedName>
    <alternativeName>
        <fullName evidence="1">Alanyl-tRNA synthetase</fullName>
        <shortName evidence="1">AlaRS</shortName>
    </alternativeName>
</protein>